<dbReference type="EMBL" id="AB051548">
    <property type="protein sequence ID" value="BAB21852.2"/>
    <property type="molecule type" value="mRNA"/>
</dbReference>
<dbReference type="EMBL" id="AK027649">
    <property type="protein sequence ID" value="BAB55265.1"/>
    <property type="molecule type" value="mRNA"/>
</dbReference>
<dbReference type="EMBL" id="AK125054">
    <property type="protein sequence ID" value="BAC86034.1"/>
    <property type="molecule type" value="mRNA"/>
</dbReference>
<dbReference type="EMBL" id="AL834196">
    <property type="protein sequence ID" value="CAH56368.1"/>
    <property type="molecule type" value="mRNA"/>
</dbReference>
<dbReference type="EMBL" id="AL772411">
    <property type="protein sequence ID" value="CAH70967.1"/>
    <property type="molecule type" value="Genomic_DNA"/>
</dbReference>
<dbReference type="EMBL" id="AL160006">
    <property type="protein sequence ID" value="CAH70967.1"/>
    <property type="status" value="JOINED"/>
    <property type="molecule type" value="Genomic_DNA"/>
</dbReference>
<dbReference type="EMBL" id="AL772411">
    <property type="protein sequence ID" value="CAH70968.1"/>
    <property type="molecule type" value="Genomic_DNA"/>
</dbReference>
<dbReference type="EMBL" id="AL160006">
    <property type="protein sequence ID" value="CAH70968.1"/>
    <property type="status" value="JOINED"/>
    <property type="molecule type" value="Genomic_DNA"/>
</dbReference>
<dbReference type="EMBL" id="AL160006">
    <property type="protein sequence ID" value="CAI22715.1"/>
    <property type="molecule type" value="Genomic_DNA"/>
</dbReference>
<dbReference type="EMBL" id="AL772411">
    <property type="protein sequence ID" value="CAI22715.1"/>
    <property type="status" value="JOINED"/>
    <property type="molecule type" value="Genomic_DNA"/>
</dbReference>
<dbReference type="EMBL" id="AL160006">
    <property type="protein sequence ID" value="CAI22716.1"/>
    <property type="molecule type" value="Genomic_DNA"/>
</dbReference>
<dbReference type="EMBL" id="AL772411">
    <property type="protein sequence ID" value="CAI22716.1"/>
    <property type="status" value="JOINED"/>
    <property type="molecule type" value="Genomic_DNA"/>
</dbReference>
<dbReference type="EMBL" id="BC032644">
    <property type="protein sequence ID" value="AAH32644.1"/>
    <property type="status" value="ALT_INIT"/>
    <property type="molecule type" value="mRNA"/>
</dbReference>
<dbReference type="EMBL" id="BC094786">
    <property type="protein sequence ID" value="AAH94786.1"/>
    <property type="molecule type" value="mRNA"/>
</dbReference>
<dbReference type="EMBL" id="BC119814">
    <property type="protein sequence ID" value="AAI19815.1"/>
    <property type="molecule type" value="mRNA"/>
</dbReference>
<dbReference type="EMBL" id="BC121793">
    <property type="protein sequence ID" value="AAI21794.1"/>
    <property type="molecule type" value="mRNA"/>
</dbReference>
<dbReference type="CCDS" id="CCDS30798.1">
    <molecule id="Q5VSL9-1"/>
</dbReference>
<dbReference type="CCDS" id="CCDS59197.1">
    <molecule id="Q5VSL9-2"/>
</dbReference>
<dbReference type="RefSeq" id="NP_001257697.1">
    <molecule id="Q5VSL9-2"/>
    <property type="nucleotide sequence ID" value="NM_001270768.2"/>
</dbReference>
<dbReference type="RefSeq" id="NP_149079.2">
    <molecule id="Q5VSL9-1"/>
    <property type="nucleotide sequence ID" value="NM_033088.4"/>
</dbReference>
<dbReference type="PDB" id="7K36">
    <property type="method" value="EM"/>
    <property type="resolution" value="3.30 A"/>
    <property type="chains" value="I=1-837"/>
</dbReference>
<dbReference type="PDBsum" id="7K36"/>
<dbReference type="EMDB" id="EMD-22650"/>
<dbReference type="SMR" id="Q5VSL9"/>
<dbReference type="BioGRID" id="124497">
    <property type="interactions" value="104"/>
</dbReference>
<dbReference type="ComplexPortal" id="CPX-2236">
    <property type="entry name" value="STRIPAK complex, STRIP1-STRN3 variant"/>
</dbReference>
<dbReference type="ComplexPortal" id="CPX-8604">
    <property type="entry name" value="STRIPAK complex, STRIP1-STRN variant"/>
</dbReference>
<dbReference type="ComplexPortal" id="CPX-8606">
    <property type="entry name" value="STRIPAK complex, STRIP1-STRN4 variant"/>
</dbReference>
<dbReference type="CORUM" id="Q5VSL9"/>
<dbReference type="DIP" id="DIP-51621N"/>
<dbReference type="FunCoup" id="Q5VSL9">
    <property type="interactions" value="3840"/>
</dbReference>
<dbReference type="IntAct" id="Q5VSL9">
    <property type="interactions" value="69"/>
</dbReference>
<dbReference type="MINT" id="Q5VSL9"/>
<dbReference type="STRING" id="9606.ENSP00000358810"/>
<dbReference type="iPTMnet" id="Q5VSL9"/>
<dbReference type="PhosphoSitePlus" id="Q5VSL9"/>
<dbReference type="BioMuta" id="STRIP1"/>
<dbReference type="DMDM" id="71648671"/>
<dbReference type="jPOST" id="Q5VSL9"/>
<dbReference type="MassIVE" id="Q5VSL9"/>
<dbReference type="PaxDb" id="9606-ENSP00000358810"/>
<dbReference type="PeptideAtlas" id="Q5VSL9"/>
<dbReference type="ProteomicsDB" id="65267">
    <molecule id="Q5VSL9-1"/>
</dbReference>
<dbReference type="ProteomicsDB" id="65268">
    <molecule id="Q5VSL9-2"/>
</dbReference>
<dbReference type="ProteomicsDB" id="65269">
    <molecule id="Q5VSL9-3"/>
</dbReference>
<dbReference type="ProteomicsDB" id="65270">
    <molecule id="Q5VSL9-4"/>
</dbReference>
<dbReference type="Pumba" id="Q5VSL9"/>
<dbReference type="Antibodypedia" id="53747">
    <property type="antibodies" value="178 antibodies from 21 providers"/>
</dbReference>
<dbReference type="DNASU" id="85369"/>
<dbReference type="Ensembl" id="ENST00000369795.8">
    <molecule id="Q5VSL9-1"/>
    <property type="protein sequence ID" value="ENSP00000358810.3"/>
    <property type="gene ID" value="ENSG00000143093.15"/>
</dbReference>
<dbReference type="Ensembl" id="ENST00000369796.5">
    <molecule id="Q5VSL9-2"/>
    <property type="protein sequence ID" value="ENSP00000358811.1"/>
    <property type="gene ID" value="ENSG00000143093.15"/>
</dbReference>
<dbReference type="Ensembl" id="ENST00000485775.5">
    <molecule id="Q5VSL9-4"/>
    <property type="protein sequence ID" value="ENSP00000476025.1"/>
    <property type="gene ID" value="ENSG00000143093.15"/>
</dbReference>
<dbReference type="GeneID" id="85369"/>
<dbReference type="KEGG" id="hsa:85369"/>
<dbReference type="MANE-Select" id="ENST00000369795.8">
    <property type="protein sequence ID" value="ENSP00000358810.3"/>
    <property type="RefSeq nucleotide sequence ID" value="NM_033088.4"/>
    <property type="RefSeq protein sequence ID" value="NP_149079.2"/>
</dbReference>
<dbReference type="UCSC" id="uc001dyz.2">
    <molecule id="Q5VSL9-1"/>
    <property type="organism name" value="human"/>
</dbReference>
<dbReference type="AGR" id="HGNC:25916"/>
<dbReference type="CTD" id="85369"/>
<dbReference type="DisGeNET" id="85369"/>
<dbReference type="GeneCards" id="STRIP1"/>
<dbReference type="HGNC" id="HGNC:25916">
    <property type="gene designation" value="STRIP1"/>
</dbReference>
<dbReference type="HPA" id="ENSG00000143093">
    <property type="expression patterns" value="Low tissue specificity"/>
</dbReference>
<dbReference type="MIM" id="617918">
    <property type="type" value="gene"/>
</dbReference>
<dbReference type="neXtProt" id="NX_Q5VSL9"/>
<dbReference type="OpenTargets" id="ENSG00000143093"/>
<dbReference type="PharmGKB" id="PA134939426"/>
<dbReference type="VEuPathDB" id="HostDB:ENSG00000143093"/>
<dbReference type="eggNOG" id="KOG3680">
    <property type="taxonomic scope" value="Eukaryota"/>
</dbReference>
<dbReference type="GeneTree" id="ENSGT00400000022095"/>
<dbReference type="HOGENOM" id="CLU_011008_1_0_1"/>
<dbReference type="InParanoid" id="Q5VSL9"/>
<dbReference type="OMA" id="KMTRAMR"/>
<dbReference type="OrthoDB" id="18234at2759"/>
<dbReference type="PAN-GO" id="Q5VSL9">
    <property type="GO annotations" value="2 GO annotations based on evolutionary models"/>
</dbReference>
<dbReference type="PhylomeDB" id="Q5VSL9"/>
<dbReference type="TreeFam" id="TF314205"/>
<dbReference type="PathwayCommons" id="Q5VSL9"/>
<dbReference type="SignaLink" id="Q5VSL9"/>
<dbReference type="BioGRID-ORCS" id="85369">
    <property type="hits" value="302 hits in 1162 CRISPR screens"/>
</dbReference>
<dbReference type="ChiTaRS" id="STRIP1">
    <property type="organism name" value="human"/>
</dbReference>
<dbReference type="GeneWiki" id="FAM40A"/>
<dbReference type="GenomeRNAi" id="85369"/>
<dbReference type="Pharos" id="Q5VSL9">
    <property type="development level" value="Tbio"/>
</dbReference>
<dbReference type="PRO" id="PR:Q5VSL9"/>
<dbReference type="Proteomes" id="UP000005640">
    <property type="component" value="Chromosome 1"/>
</dbReference>
<dbReference type="RNAct" id="Q5VSL9">
    <property type="molecule type" value="protein"/>
</dbReference>
<dbReference type="Bgee" id="ENSG00000143093">
    <property type="expression patterns" value="Expressed in cortical plate and 162 other cell types or tissues"/>
</dbReference>
<dbReference type="GO" id="GO:0005829">
    <property type="term" value="C:cytosol"/>
    <property type="evidence" value="ECO:0000314"/>
    <property type="project" value="HPA"/>
</dbReference>
<dbReference type="GO" id="GO:0070062">
    <property type="term" value="C:extracellular exosome"/>
    <property type="evidence" value="ECO:0007005"/>
    <property type="project" value="UniProtKB"/>
</dbReference>
<dbReference type="GO" id="GO:0090443">
    <property type="term" value="C:FAR/SIN/STRIPAK complex"/>
    <property type="evidence" value="ECO:0000314"/>
    <property type="project" value="UniProtKB"/>
</dbReference>
<dbReference type="GO" id="GO:0005634">
    <property type="term" value="C:nucleus"/>
    <property type="evidence" value="ECO:0000314"/>
    <property type="project" value="UniProtKB"/>
</dbReference>
<dbReference type="GO" id="GO:0019901">
    <property type="term" value="F:protein kinase binding"/>
    <property type="evidence" value="ECO:0007669"/>
    <property type="project" value="Ensembl"/>
</dbReference>
<dbReference type="GO" id="GO:0030674">
    <property type="term" value="F:protein-macromolecule adaptor activity"/>
    <property type="evidence" value="ECO:0000314"/>
    <property type="project" value="UniProtKB"/>
</dbReference>
<dbReference type="GO" id="GO:0031267">
    <property type="term" value="F:small GTPase binding"/>
    <property type="evidence" value="ECO:0007669"/>
    <property type="project" value="Ensembl"/>
</dbReference>
<dbReference type="GO" id="GO:0030866">
    <property type="term" value="P:cortical actin cytoskeleton organization"/>
    <property type="evidence" value="ECO:0000315"/>
    <property type="project" value="UniProtKB"/>
</dbReference>
<dbReference type="GO" id="GO:0007010">
    <property type="term" value="P:cytoskeleton organization"/>
    <property type="evidence" value="ECO:0000318"/>
    <property type="project" value="GO_Central"/>
</dbReference>
<dbReference type="GO" id="GO:0035331">
    <property type="term" value="P:negative regulation of hippo signaling"/>
    <property type="evidence" value="ECO:0000314"/>
    <property type="project" value="UniProtKB"/>
</dbReference>
<dbReference type="GO" id="GO:0022604">
    <property type="term" value="P:regulation of cell morphogenesis"/>
    <property type="evidence" value="ECO:0000315"/>
    <property type="project" value="UniProtKB"/>
</dbReference>
<dbReference type="InterPro" id="IPR040185">
    <property type="entry name" value="Far11/STRP"/>
</dbReference>
<dbReference type="InterPro" id="IPR021819">
    <property type="entry name" value="Far11/STRP_C"/>
</dbReference>
<dbReference type="InterPro" id="IPR012486">
    <property type="entry name" value="Far11/STRP_N"/>
</dbReference>
<dbReference type="PANTHER" id="PTHR13239">
    <property type="entry name" value="PROTEIN REQUIRED FOR HYPHAL ANASTOMOSIS HAM-2"/>
    <property type="match status" value="1"/>
</dbReference>
<dbReference type="PANTHER" id="PTHR13239:SF7">
    <property type="entry name" value="STRIATIN-INTERACTING PROTEIN 1"/>
    <property type="match status" value="1"/>
</dbReference>
<dbReference type="Pfam" id="PF11882">
    <property type="entry name" value="DUF3402"/>
    <property type="match status" value="2"/>
</dbReference>
<dbReference type="Pfam" id="PF07923">
    <property type="entry name" value="N1221"/>
    <property type="match status" value="1"/>
</dbReference>
<dbReference type="SMART" id="SM01293">
    <property type="entry name" value="DUF3402"/>
    <property type="match status" value="1"/>
</dbReference>
<dbReference type="SMART" id="SM01292">
    <property type="entry name" value="N1221"/>
    <property type="match status" value="1"/>
</dbReference>
<proteinExistence type="evidence at protein level"/>
<feature type="chain" id="PRO_0000187017" description="Striatin-interacting protein 1">
    <location>
        <begin position="1"/>
        <end position="837"/>
    </location>
</feature>
<feature type="region of interest" description="Disordered" evidence="2">
    <location>
        <begin position="1"/>
        <end position="67"/>
    </location>
</feature>
<feature type="region of interest" description="Disordered" evidence="2">
    <location>
        <begin position="333"/>
        <end position="423"/>
    </location>
</feature>
<feature type="region of interest" description="Required for STRIPAK core complex formation" evidence="8">
    <location>
        <begin position="796"/>
        <end position="837"/>
    </location>
</feature>
<feature type="compositionally biased region" description="Pro residues" evidence="2">
    <location>
        <begin position="18"/>
        <end position="35"/>
    </location>
</feature>
<feature type="compositionally biased region" description="Low complexity" evidence="2">
    <location>
        <begin position="36"/>
        <end position="46"/>
    </location>
</feature>
<feature type="compositionally biased region" description="Basic and acidic residues" evidence="2">
    <location>
        <begin position="47"/>
        <end position="60"/>
    </location>
</feature>
<feature type="compositionally biased region" description="Basic and acidic residues" evidence="2">
    <location>
        <begin position="356"/>
        <end position="377"/>
    </location>
</feature>
<feature type="compositionally biased region" description="Acidic residues" evidence="2">
    <location>
        <begin position="378"/>
        <end position="391"/>
    </location>
</feature>
<feature type="modified residue" description="N-acetylmethionine" evidence="19 23">
    <location>
        <position position="1"/>
    </location>
</feature>
<feature type="modified residue" description="Phosphoserine" evidence="24 25">
    <location>
        <position position="59"/>
    </location>
</feature>
<feature type="modified residue" description="Phosphoserine" evidence="14 15 16 17 18 20 21 22 24 25">
    <location>
        <position position="335"/>
    </location>
</feature>
<feature type="modified residue" description="Phosphoserine" evidence="1">
    <location>
        <position position="339"/>
    </location>
</feature>
<feature type="modified residue" description="Phosphoserine" evidence="25">
    <location>
        <position position="788"/>
    </location>
</feature>
<feature type="splice variant" id="VSP_014856" description="In isoform 3." evidence="9">
    <location>
        <begin position="1"/>
        <end position="264"/>
    </location>
</feature>
<feature type="splice variant" id="VSP_014857" description="In isoform 2." evidence="9">
    <location>
        <begin position="1"/>
        <end position="95"/>
    </location>
</feature>
<feature type="splice variant" id="VSP_014858" description="In isoform 4." evidence="10">
    <original>DNSAACSSAVRKPAISLAD</original>
    <variation>EHCCVRPAVSALAGGQAQD</variation>
    <location>
        <begin position="194"/>
        <end position="212"/>
    </location>
</feature>
<feature type="splice variant" id="VSP_014859" description="In isoform 4." evidence="10">
    <location>
        <begin position="213"/>
        <end position="837"/>
    </location>
</feature>
<feature type="splice variant" id="VSP_014860" description="In isoform 3." evidence="9">
    <original>Q</original>
    <variation>QVPTGLSLLSCGLGPRALLLLQPTRTGALAFDPLELCMNVLRHGPSAKAFHPWRKEGKVPRAAPFFFFFFSCWLQ</variation>
    <location>
        <position position="596"/>
    </location>
</feature>
<feature type="splice variant" id="VSP_014861" description="In isoform 3." evidence="9">
    <original>S</original>
    <variation>R</variation>
    <location>
        <position position="630"/>
    </location>
</feature>
<feature type="splice variant" id="VSP_014862" description="In isoform 3." evidence="9">
    <location>
        <begin position="631"/>
        <end position="837"/>
    </location>
</feature>
<feature type="sequence variant" id="VAR_076430" evidence="6">
    <original>K</original>
    <variation>N</variation>
    <location>
        <position position="628"/>
    </location>
</feature>
<feature type="mutagenesis site" description="Decreased formation of STRIPAK core complex." evidence="8">
    <original>DGLE</original>
    <variation>EGLK</variation>
    <location>
        <begin position="131"/>
        <end position="134"/>
    </location>
</feature>
<feature type="mutagenesis site" description="Decreased interaction with other STRIPAK core complex components. Decreased inhibition of Hippo signaling." evidence="8">
    <original>K</original>
    <variation>E</variation>
    <location>
        <position position="427"/>
    </location>
</feature>
<feature type="mutagenesis site" description="Decreased interaction with other STRIPAK core complex components. Decreased inhibition of Hippo signaling." evidence="8">
    <original>R</original>
    <variation>E</variation>
    <location>
        <position position="744"/>
    </location>
</feature>
<feature type="sequence conflict" description="In Ref. 3; BAC86034." evidence="11" ref="3">
    <original>P</original>
    <variation>L</variation>
    <location>
        <position position="397"/>
    </location>
</feature>
<feature type="sequence conflict" description="In Ref. 3; BAB55265." evidence="11" ref="3">
    <original>R</original>
    <variation>Q</variation>
    <location>
        <position position="744"/>
    </location>
</feature>
<feature type="helix" evidence="26">
    <location>
        <begin position="78"/>
        <end position="83"/>
    </location>
</feature>
<feature type="strand" evidence="26">
    <location>
        <begin position="88"/>
        <end position="90"/>
    </location>
</feature>
<feature type="helix" evidence="26">
    <location>
        <begin position="93"/>
        <end position="108"/>
    </location>
</feature>
<feature type="turn" evidence="26">
    <location>
        <begin position="114"/>
        <end position="116"/>
    </location>
</feature>
<feature type="helix" evidence="26">
    <location>
        <begin position="119"/>
        <end position="132"/>
    </location>
</feature>
<feature type="helix" evidence="26">
    <location>
        <begin position="138"/>
        <end position="153"/>
    </location>
</feature>
<feature type="helix" evidence="26">
    <location>
        <begin position="162"/>
        <end position="179"/>
    </location>
</feature>
<feature type="helix" evidence="26">
    <location>
        <begin position="181"/>
        <end position="193"/>
    </location>
</feature>
<feature type="helix" evidence="26">
    <location>
        <begin position="211"/>
        <end position="213"/>
    </location>
</feature>
<feature type="helix" evidence="26">
    <location>
        <begin position="215"/>
        <end position="232"/>
    </location>
</feature>
<feature type="helix" evidence="26">
    <location>
        <begin position="242"/>
        <end position="252"/>
    </location>
</feature>
<feature type="helix" evidence="26">
    <location>
        <begin position="262"/>
        <end position="274"/>
    </location>
</feature>
<feature type="helix" evidence="26">
    <location>
        <begin position="283"/>
        <end position="298"/>
    </location>
</feature>
<feature type="helix" evidence="26">
    <location>
        <begin position="301"/>
        <end position="314"/>
    </location>
</feature>
<feature type="helix" evidence="26">
    <location>
        <begin position="324"/>
        <end position="329"/>
    </location>
</feature>
<feature type="helix" evidence="26">
    <location>
        <begin position="430"/>
        <end position="444"/>
    </location>
</feature>
<feature type="strand" evidence="26">
    <location>
        <begin position="445"/>
        <end position="447"/>
    </location>
</feature>
<feature type="strand" evidence="26">
    <location>
        <begin position="457"/>
        <end position="459"/>
    </location>
</feature>
<feature type="helix" evidence="26">
    <location>
        <begin position="461"/>
        <end position="472"/>
    </location>
</feature>
<feature type="helix" evidence="26">
    <location>
        <begin position="478"/>
        <end position="491"/>
    </location>
</feature>
<feature type="strand" evidence="26">
    <location>
        <begin position="492"/>
        <end position="496"/>
    </location>
</feature>
<feature type="helix" evidence="26">
    <location>
        <begin position="505"/>
        <end position="513"/>
    </location>
</feature>
<feature type="helix" evidence="26">
    <location>
        <begin position="514"/>
        <end position="516"/>
    </location>
</feature>
<feature type="helix" evidence="26">
    <location>
        <begin position="517"/>
        <end position="531"/>
    </location>
</feature>
<feature type="helix" evidence="26">
    <location>
        <begin position="544"/>
        <end position="547"/>
    </location>
</feature>
<feature type="helix" evidence="26">
    <location>
        <begin position="557"/>
        <end position="592"/>
    </location>
</feature>
<feature type="helix" evidence="26">
    <location>
        <begin position="594"/>
        <end position="606"/>
    </location>
</feature>
<feature type="helix" evidence="26">
    <location>
        <begin position="609"/>
        <end position="616"/>
    </location>
</feature>
<feature type="helix" evidence="26">
    <location>
        <begin position="621"/>
        <end position="626"/>
    </location>
</feature>
<feature type="helix" evidence="26">
    <location>
        <begin position="662"/>
        <end position="678"/>
    </location>
</feature>
<feature type="strand" evidence="26">
    <location>
        <begin position="679"/>
        <end position="681"/>
    </location>
</feature>
<feature type="helix" evidence="26">
    <location>
        <begin position="683"/>
        <end position="691"/>
    </location>
</feature>
<feature type="helix" evidence="26">
    <location>
        <begin position="695"/>
        <end position="701"/>
    </location>
</feature>
<feature type="helix" evidence="26">
    <location>
        <begin position="707"/>
        <end position="720"/>
    </location>
</feature>
<feature type="helix" evidence="26">
    <location>
        <begin position="722"/>
        <end position="724"/>
    </location>
</feature>
<feature type="helix" evidence="26">
    <location>
        <begin position="725"/>
        <end position="731"/>
    </location>
</feature>
<feature type="helix" evidence="26">
    <location>
        <begin position="734"/>
        <end position="742"/>
    </location>
</feature>
<feature type="helix" evidence="26">
    <location>
        <begin position="764"/>
        <end position="783"/>
    </location>
</feature>
<feature type="turn" evidence="26">
    <location>
        <begin position="785"/>
        <end position="787"/>
    </location>
</feature>
<feature type="strand" evidence="26">
    <location>
        <begin position="790"/>
        <end position="792"/>
    </location>
</feature>
<feature type="helix" evidence="26">
    <location>
        <begin position="815"/>
        <end position="822"/>
    </location>
</feature>
<name>STRP1_HUMAN</name>
<organism>
    <name type="scientific">Homo sapiens</name>
    <name type="common">Human</name>
    <dbReference type="NCBI Taxonomy" id="9606"/>
    <lineage>
        <taxon>Eukaryota</taxon>
        <taxon>Metazoa</taxon>
        <taxon>Chordata</taxon>
        <taxon>Craniata</taxon>
        <taxon>Vertebrata</taxon>
        <taxon>Euteleostomi</taxon>
        <taxon>Mammalia</taxon>
        <taxon>Eutheria</taxon>
        <taxon>Euarchontoglires</taxon>
        <taxon>Primates</taxon>
        <taxon>Haplorrhini</taxon>
        <taxon>Catarrhini</taxon>
        <taxon>Hominidae</taxon>
        <taxon>Homo</taxon>
    </lineage>
</organism>
<gene>
    <name evidence="12" type="primary">STRIP1</name>
    <name type="synonym">FAM40A</name>
    <name type="synonym">KIAA1761</name>
</gene>
<accession>Q5VSL9</accession>
<accession>Q0V925</accession>
<accession>Q5VSL8</accession>
<accession>Q658K2</accession>
<accession>Q6ZV31</accession>
<accession>Q8N598</accession>
<accession>Q96SN2</accession>
<accession>Q9C0A2</accession>
<protein>
    <recommendedName>
        <fullName>Striatin-interacting protein 1</fullName>
    </recommendedName>
    <alternativeName>
        <fullName>Protein FAM40A</fullName>
    </alternativeName>
</protein>
<comment type="function">
    <text evidence="3 4 7 8">Plays a role in the regulation of cell morphology and cytoskeletal organization. Required in the cortical actin filament dynamics and cell shape. Part of the striatin-interacting phosphatase and kinase (STRIPAK) complexes. STRIPAK complexes have critical roles in protein (de)phosphorylation and are regulators of multiple signaling pathways including Hippo, MAPK, nuclear receptor and cytoskeleton remodeling. Different types of STRIPAK complexes are involved in a variety of biological processes such as cell growth, differentiation, apoptosis, metabolism and immune regulation.</text>
</comment>
<comment type="subunit">
    <text evidence="1 3 5 7 8">Part of the core of STRIPAK complexes composed of PP2A catalytic and scaffolding subunits, the striatins (PP2A regulatory subunits), the striatin-associated proteins MOB4, STRIP1 and STRIP2, PDCD10 and members of the STE20 kinases, such as STK24 and STK26 (PubMed:18782753, PubMed:33633399). The STRIPAK complex can be extended by adapter proteins such as SLMAP:SIKE1, CTTNBP2 or CTTNBP2NL (PubMed:30622739). Interacts with CDC42BPB (PubMed:25743393). Interacts with CTTNBP2NL (PubMed:18782753).</text>
</comment>
<comment type="interaction">
    <interactant intactId="EBI-1773588">
        <id>Q5VSL9</id>
    </interactant>
    <interactant intactId="EBI-1774273">
        <id>Q9P2B4</id>
        <label>CTTNBP2NL</label>
    </interactant>
    <organismsDiffer>false</organismsDiffer>
    <experiments>6</experiments>
</comment>
<comment type="interaction">
    <interactant intactId="EBI-1773588">
        <id>Q5VSL9</id>
    </interactant>
    <interactant intactId="EBI-712311">
        <id>P67775</id>
        <label>PPP2CA</label>
    </interactant>
    <organismsDiffer>false</organismsDiffer>
    <experiments>10</experiments>
</comment>
<comment type="interaction">
    <interactant intactId="EBI-1773588">
        <id>Q5VSL9</id>
    </interactant>
    <interactant intactId="EBI-1044367">
        <id>P62714</id>
        <label>PPP2CB</label>
    </interactant>
    <organismsDiffer>false</organismsDiffer>
    <experiments>8</experiments>
</comment>
<comment type="interaction">
    <interactant intactId="EBI-1773588">
        <id>Q5VSL9</id>
    </interactant>
    <interactant intactId="EBI-740175">
        <id>Q9Y6E0</id>
        <label>STK24</label>
    </interactant>
    <organismsDiffer>false</organismsDiffer>
    <experiments>5</experiments>
</comment>
<comment type="interaction">
    <interactant intactId="EBI-1773588">
        <id>Q5VSL9</id>
    </interactant>
    <interactant intactId="EBI-618239">
        <id>Q9P289</id>
        <label>STK26</label>
    </interactant>
    <organismsDiffer>false</organismsDiffer>
    <experiments>4</experiments>
</comment>
<comment type="interaction">
    <interactant intactId="EBI-1773588">
        <id>Q5VSL9</id>
    </interactant>
    <interactant intactId="EBI-765817">
        <id>Q9Y228</id>
        <label>TRAF3IP3</label>
    </interactant>
    <organismsDiffer>false</organismsDiffer>
    <experiments>4</experiments>
</comment>
<comment type="subcellular location">
    <subcellularLocation>
        <location evidence="4">Cytoplasm</location>
    </subcellularLocation>
    <text>Enriched on the plasma membrane.</text>
</comment>
<comment type="alternative products">
    <event type="alternative splicing"/>
    <isoform>
        <id>Q5VSL9-1</id>
        <name>1</name>
        <sequence type="displayed"/>
    </isoform>
    <isoform>
        <id>Q5VSL9-2</id>
        <name>2</name>
        <sequence type="described" ref="VSP_014857"/>
    </isoform>
    <isoform>
        <id>Q5VSL9-3</id>
        <name>3</name>
        <sequence type="described" ref="VSP_014856 VSP_014860 VSP_014861 VSP_014862"/>
    </isoform>
    <isoform>
        <id>Q5VSL9-4</id>
        <name>4</name>
        <sequence type="described" ref="VSP_014858 VSP_014859"/>
    </isoform>
</comment>
<comment type="similarity">
    <text evidence="11">Belongs to the STRIP family.</text>
</comment>
<comment type="sequence caution" evidence="11">
    <conflict type="erroneous initiation">
        <sequence resource="EMBL-CDS" id="AAH32644"/>
    </conflict>
    <text>Extended N-terminus.</text>
</comment>
<evidence type="ECO:0000250" key="1">
    <source>
        <dbReference type="UniProtKB" id="Q8C079"/>
    </source>
</evidence>
<evidence type="ECO:0000256" key="2">
    <source>
        <dbReference type="SAM" id="MobiDB-lite"/>
    </source>
</evidence>
<evidence type="ECO:0000269" key="3">
    <source>
    </source>
</evidence>
<evidence type="ECO:0000269" key="4">
    <source>
    </source>
</evidence>
<evidence type="ECO:0000269" key="5">
    <source>
    </source>
</evidence>
<evidence type="ECO:0000269" key="6">
    <source>
    </source>
</evidence>
<evidence type="ECO:0000269" key="7">
    <source>
    </source>
</evidence>
<evidence type="ECO:0000269" key="8">
    <source>
    </source>
</evidence>
<evidence type="ECO:0000303" key="9">
    <source>
    </source>
</evidence>
<evidence type="ECO:0000303" key="10">
    <source>
    </source>
</evidence>
<evidence type="ECO:0000305" key="11"/>
<evidence type="ECO:0000312" key="12">
    <source>
        <dbReference type="HGNC" id="HGNC:25916"/>
    </source>
</evidence>
<evidence type="ECO:0007744" key="13">
    <source>
        <dbReference type="PDB" id="7K36"/>
    </source>
</evidence>
<evidence type="ECO:0007744" key="14">
    <source>
    </source>
</evidence>
<evidence type="ECO:0007744" key="15">
    <source>
    </source>
</evidence>
<evidence type="ECO:0007744" key="16">
    <source>
    </source>
</evidence>
<evidence type="ECO:0007744" key="17">
    <source>
    </source>
</evidence>
<evidence type="ECO:0007744" key="18">
    <source>
    </source>
</evidence>
<evidence type="ECO:0007744" key="19">
    <source>
    </source>
</evidence>
<evidence type="ECO:0007744" key="20">
    <source>
    </source>
</evidence>
<evidence type="ECO:0007744" key="21">
    <source>
    </source>
</evidence>
<evidence type="ECO:0007744" key="22">
    <source>
    </source>
</evidence>
<evidence type="ECO:0007744" key="23">
    <source>
    </source>
</evidence>
<evidence type="ECO:0007744" key="24">
    <source>
    </source>
</evidence>
<evidence type="ECO:0007744" key="25">
    <source>
    </source>
</evidence>
<evidence type="ECO:0007829" key="26">
    <source>
        <dbReference type="PDB" id="7K36"/>
    </source>
</evidence>
<sequence length="837" mass="95576">MEPAVGGPGPLIVNNKQPQPPPPPPPAAAQPPPGAPRAAAGLLPGGKAREFNRNQRKDSEGYSESPDLEFEYADTDKWAAELSELYSYTEGPEFLMNRKCFEEDFRIHVTDKKWTELDTNQHRTHAMRLLDGLEVTAREKRLKVARAILYVAQGTFGECSSEAEVQSWMRYNIFLLLEVGTFNALVELLNMEIDNSAACSSAVRKPAISLADSTDLRVLLNIMYLIVETVHQECEGDKAEWRTMRQTFRAELGSPLYNNEPFAIMLFGMVTKFCSGHAPHFPMKKVLLLLWKTVLCTLGGFEELQSMKAEKRSILGLPPLPEDSIKVIRNMRAASPPASASDLIEQQQKRGRREHKALIKQDNLDAFNERDPYKADDSREEEEENDDDNSLEGETFPLERDEVMPPPLQHPQTDRLTCPKGLPWAPKVREKDIEMFLESSRSKFIGYTLGSDTNTVVGLPRPIHESIKTLKQHKYTSIAEVQAQMEEEYLRSPLSGGEEEVEQVPAETLYQGLLPSLPQYMIALLKILLAAAPTSKAKTDSINILADVLPEEMPTTVLQSMKLGVDVNRHKEVIVKAISAVLLLLLKHFKLNHVYQFEYMAQHLVFANCIPLILKFFNQNIMSYITAKNSISVLDYPHCVVHELPELTAESLEAGDSNQFCWRNLFSCINLLRILNKLTKWKHSRTMMLVVFKSAPILKRALKVKQAMMQLYVLKLLKVQTKYLGRQWRKSNMKTMSAIYQKVRHRLNDDWAYGNDLDARPWDFQAEECALRANIERFNARRYDRAHSNPDFLPVDNCLQSVLGQRVDLPEDFQMNYDLWLEREVFSKPISWEELLQ</sequence>
<keyword id="KW-0002">3D-structure</keyword>
<keyword id="KW-0007">Acetylation</keyword>
<keyword id="KW-0025">Alternative splicing</keyword>
<keyword id="KW-0963">Cytoplasm</keyword>
<keyword id="KW-0597">Phosphoprotein</keyword>
<keyword id="KW-1267">Proteomics identification</keyword>
<keyword id="KW-1185">Reference proteome</keyword>
<reference key="1">
    <citation type="journal article" date="2000" name="DNA Res.">
        <title>Prediction of the coding sequences of unidentified human genes. XIX. The complete sequences of 100 new cDNA clones from brain which code for large proteins in vitro.</title>
        <authorList>
            <person name="Nagase T."/>
            <person name="Kikuno R."/>
            <person name="Hattori A."/>
            <person name="Kondo Y."/>
            <person name="Okumura K."/>
            <person name="Ohara O."/>
        </authorList>
    </citation>
    <scope>NUCLEOTIDE SEQUENCE [LARGE SCALE MRNA] (ISOFORM 1)</scope>
    <source>
        <tissue>Brain</tissue>
    </source>
</reference>
<reference key="2">
    <citation type="submission" date="2005-04" db="EMBL/GenBank/DDBJ databases">
        <authorList>
            <person name="Ohara O."/>
            <person name="Nagase T."/>
            <person name="Kikuno R."/>
        </authorList>
    </citation>
    <scope>SEQUENCE REVISION</scope>
</reference>
<reference key="3">
    <citation type="journal article" date="2004" name="Nat. Genet.">
        <title>Complete sequencing and characterization of 21,243 full-length human cDNAs.</title>
        <authorList>
            <person name="Ota T."/>
            <person name="Suzuki Y."/>
            <person name="Nishikawa T."/>
            <person name="Otsuki T."/>
            <person name="Sugiyama T."/>
            <person name="Irie R."/>
            <person name="Wakamatsu A."/>
            <person name="Hayashi K."/>
            <person name="Sato H."/>
            <person name="Nagai K."/>
            <person name="Kimura K."/>
            <person name="Makita H."/>
            <person name="Sekine M."/>
            <person name="Obayashi M."/>
            <person name="Nishi T."/>
            <person name="Shibahara T."/>
            <person name="Tanaka T."/>
            <person name="Ishii S."/>
            <person name="Yamamoto J."/>
            <person name="Saito K."/>
            <person name="Kawai Y."/>
            <person name="Isono Y."/>
            <person name="Nakamura Y."/>
            <person name="Nagahari K."/>
            <person name="Murakami K."/>
            <person name="Yasuda T."/>
            <person name="Iwayanagi T."/>
            <person name="Wagatsuma M."/>
            <person name="Shiratori A."/>
            <person name="Sudo H."/>
            <person name="Hosoiri T."/>
            <person name="Kaku Y."/>
            <person name="Kodaira H."/>
            <person name="Kondo H."/>
            <person name="Sugawara M."/>
            <person name="Takahashi M."/>
            <person name="Kanda K."/>
            <person name="Yokoi T."/>
            <person name="Furuya T."/>
            <person name="Kikkawa E."/>
            <person name="Omura Y."/>
            <person name="Abe K."/>
            <person name="Kamihara K."/>
            <person name="Katsuta N."/>
            <person name="Sato K."/>
            <person name="Tanikawa M."/>
            <person name="Yamazaki M."/>
            <person name="Ninomiya K."/>
            <person name="Ishibashi T."/>
            <person name="Yamashita H."/>
            <person name="Murakawa K."/>
            <person name="Fujimori K."/>
            <person name="Tanai H."/>
            <person name="Kimata M."/>
            <person name="Watanabe M."/>
            <person name="Hiraoka S."/>
            <person name="Chiba Y."/>
            <person name="Ishida S."/>
            <person name="Ono Y."/>
            <person name="Takiguchi S."/>
            <person name="Watanabe S."/>
            <person name="Yosida M."/>
            <person name="Hotuta T."/>
            <person name="Kusano J."/>
            <person name="Kanehori K."/>
            <person name="Takahashi-Fujii A."/>
            <person name="Hara H."/>
            <person name="Tanase T.-O."/>
            <person name="Nomura Y."/>
            <person name="Togiya S."/>
            <person name="Komai F."/>
            <person name="Hara R."/>
            <person name="Takeuchi K."/>
            <person name="Arita M."/>
            <person name="Imose N."/>
            <person name="Musashino K."/>
            <person name="Yuuki H."/>
            <person name="Oshima A."/>
            <person name="Sasaki N."/>
            <person name="Aotsuka S."/>
            <person name="Yoshikawa Y."/>
            <person name="Matsunawa H."/>
            <person name="Ichihara T."/>
            <person name="Shiohata N."/>
            <person name="Sano S."/>
            <person name="Moriya S."/>
            <person name="Momiyama H."/>
            <person name="Satoh N."/>
            <person name="Takami S."/>
            <person name="Terashima Y."/>
            <person name="Suzuki O."/>
            <person name="Nakagawa S."/>
            <person name="Senoh A."/>
            <person name="Mizoguchi H."/>
            <person name="Goto Y."/>
            <person name="Shimizu F."/>
            <person name="Wakebe H."/>
            <person name="Hishigaki H."/>
            <person name="Watanabe T."/>
            <person name="Sugiyama A."/>
            <person name="Takemoto M."/>
            <person name="Kawakami B."/>
            <person name="Yamazaki M."/>
            <person name="Watanabe K."/>
            <person name="Kumagai A."/>
            <person name="Itakura S."/>
            <person name="Fukuzumi Y."/>
            <person name="Fujimori Y."/>
            <person name="Komiyama M."/>
            <person name="Tashiro H."/>
            <person name="Tanigami A."/>
            <person name="Fujiwara T."/>
            <person name="Ono T."/>
            <person name="Yamada K."/>
            <person name="Fujii Y."/>
            <person name="Ozaki K."/>
            <person name="Hirao M."/>
            <person name="Ohmori Y."/>
            <person name="Kawabata A."/>
            <person name="Hikiji T."/>
            <person name="Kobatake N."/>
            <person name="Inagaki H."/>
            <person name="Ikema Y."/>
            <person name="Okamoto S."/>
            <person name="Okitani R."/>
            <person name="Kawakami T."/>
            <person name="Noguchi S."/>
            <person name="Itoh T."/>
            <person name="Shigeta K."/>
            <person name="Senba T."/>
            <person name="Matsumura K."/>
            <person name="Nakajima Y."/>
            <person name="Mizuno T."/>
            <person name="Morinaga M."/>
            <person name="Sasaki M."/>
            <person name="Togashi T."/>
            <person name="Oyama M."/>
            <person name="Hata H."/>
            <person name="Watanabe M."/>
            <person name="Komatsu T."/>
            <person name="Mizushima-Sugano J."/>
            <person name="Satoh T."/>
            <person name="Shirai Y."/>
            <person name="Takahashi Y."/>
            <person name="Nakagawa K."/>
            <person name="Okumura K."/>
            <person name="Nagase T."/>
            <person name="Nomura N."/>
            <person name="Kikuchi H."/>
            <person name="Masuho Y."/>
            <person name="Yamashita R."/>
            <person name="Nakai K."/>
            <person name="Yada T."/>
            <person name="Nakamura Y."/>
            <person name="Ohara O."/>
            <person name="Isogai T."/>
            <person name="Sugano S."/>
        </authorList>
    </citation>
    <scope>NUCLEOTIDE SEQUENCE [LARGE SCALE MRNA] (ISOFORMS 2 AND 3)</scope>
    <source>
        <tissue>Thalamus</tissue>
    </source>
</reference>
<reference key="4">
    <citation type="journal article" date="2007" name="BMC Genomics">
        <title>The full-ORF clone resource of the German cDNA consortium.</title>
        <authorList>
            <person name="Bechtel S."/>
            <person name="Rosenfelder H."/>
            <person name="Duda A."/>
            <person name="Schmidt C.P."/>
            <person name="Ernst U."/>
            <person name="Wellenreuther R."/>
            <person name="Mehrle A."/>
            <person name="Schuster C."/>
            <person name="Bahr A."/>
            <person name="Bloecker H."/>
            <person name="Heubner D."/>
            <person name="Hoerlein A."/>
            <person name="Michel G."/>
            <person name="Wedler H."/>
            <person name="Koehrer K."/>
            <person name="Ottenwaelder B."/>
            <person name="Poustka A."/>
            <person name="Wiemann S."/>
            <person name="Schupp I."/>
        </authorList>
    </citation>
    <scope>NUCLEOTIDE SEQUENCE [LARGE SCALE MRNA] (ISOFORM 4)</scope>
    <source>
        <tissue>Amygdala</tissue>
    </source>
</reference>
<reference key="5">
    <citation type="journal article" date="2006" name="Nature">
        <title>The DNA sequence and biological annotation of human chromosome 1.</title>
        <authorList>
            <person name="Gregory S.G."/>
            <person name="Barlow K.F."/>
            <person name="McLay K.E."/>
            <person name="Kaul R."/>
            <person name="Swarbreck D."/>
            <person name="Dunham A."/>
            <person name="Scott C.E."/>
            <person name="Howe K.L."/>
            <person name="Woodfine K."/>
            <person name="Spencer C.C.A."/>
            <person name="Jones M.C."/>
            <person name="Gillson C."/>
            <person name="Searle S."/>
            <person name="Zhou Y."/>
            <person name="Kokocinski F."/>
            <person name="McDonald L."/>
            <person name="Evans R."/>
            <person name="Phillips K."/>
            <person name="Atkinson A."/>
            <person name="Cooper R."/>
            <person name="Jones C."/>
            <person name="Hall R.E."/>
            <person name="Andrews T.D."/>
            <person name="Lloyd C."/>
            <person name="Ainscough R."/>
            <person name="Almeida J.P."/>
            <person name="Ambrose K.D."/>
            <person name="Anderson F."/>
            <person name="Andrew R.W."/>
            <person name="Ashwell R.I.S."/>
            <person name="Aubin K."/>
            <person name="Babbage A.K."/>
            <person name="Bagguley C.L."/>
            <person name="Bailey J."/>
            <person name="Beasley H."/>
            <person name="Bethel G."/>
            <person name="Bird C.P."/>
            <person name="Bray-Allen S."/>
            <person name="Brown J.Y."/>
            <person name="Brown A.J."/>
            <person name="Buckley D."/>
            <person name="Burton J."/>
            <person name="Bye J."/>
            <person name="Carder C."/>
            <person name="Chapman J.C."/>
            <person name="Clark S.Y."/>
            <person name="Clarke G."/>
            <person name="Clee C."/>
            <person name="Cobley V."/>
            <person name="Collier R.E."/>
            <person name="Corby N."/>
            <person name="Coville G.J."/>
            <person name="Davies J."/>
            <person name="Deadman R."/>
            <person name="Dunn M."/>
            <person name="Earthrowl M."/>
            <person name="Ellington A.G."/>
            <person name="Errington H."/>
            <person name="Frankish A."/>
            <person name="Frankland J."/>
            <person name="French L."/>
            <person name="Garner P."/>
            <person name="Garnett J."/>
            <person name="Gay L."/>
            <person name="Ghori M.R.J."/>
            <person name="Gibson R."/>
            <person name="Gilby L.M."/>
            <person name="Gillett W."/>
            <person name="Glithero R.J."/>
            <person name="Grafham D.V."/>
            <person name="Griffiths C."/>
            <person name="Griffiths-Jones S."/>
            <person name="Grocock R."/>
            <person name="Hammond S."/>
            <person name="Harrison E.S.I."/>
            <person name="Hart E."/>
            <person name="Haugen E."/>
            <person name="Heath P.D."/>
            <person name="Holmes S."/>
            <person name="Holt K."/>
            <person name="Howden P.J."/>
            <person name="Hunt A.R."/>
            <person name="Hunt S.E."/>
            <person name="Hunter G."/>
            <person name="Isherwood J."/>
            <person name="James R."/>
            <person name="Johnson C."/>
            <person name="Johnson D."/>
            <person name="Joy A."/>
            <person name="Kay M."/>
            <person name="Kershaw J.K."/>
            <person name="Kibukawa M."/>
            <person name="Kimberley A.M."/>
            <person name="King A."/>
            <person name="Knights A.J."/>
            <person name="Lad H."/>
            <person name="Laird G."/>
            <person name="Lawlor S."/>
            <person name="Leongamornlert D.A."/>
            <person name="Lloyd D.M."/>
            <person name="Loveland J."/>
            <person name="Lovell J."/>
            <person name="Lush M.J."/>
            <person name="Lyne R."/>
            <person name="Martin S."/>
            <person name="Mashreghi-Mohammadi M."/>
            <person name="Matthews L."/>
            <person name="Matthews N.S.W."/>
            <person name="McLaren S."/>
            <person name="Milne S."/>
            <person name="Mistry S."/>
            <person name="Moore M.J.F."/>
            <person name="Nickerson T."/>
            <person name="O'Dell C.N."/>
            <person name="Oliver K."/>
            <person name="Palmeiri A."/>
            <person name="Palmer S.A."/>
            <person name="Parker A."/>
            <person name="Patel D."/>
            <person name="Pearce A.V."/>
            <person name="Peck A.I."/>
            <person name="Pelan S."/>
            <person name="Phelps K."/>
            <person name="Phillimore B.J."/>
            <person name="Plumb R."/>
            <person name="Rajan J."/>
            <person name="Raymond C."/>
            <person name="Rouse G."/>
            <person name="Saenphimmachak C."/>
            <person name="Sehra H.K."/>
            <person name="Sheridan E."/>
            <person name="Shownkeen R."/>
            <person name="Sims S."/>
            <person name="Skuce C.D."/>
            <person name="Smith M."/>
            <person name="Steward C."/>
            <person name="Subramanian S."/>
            <person name="Sycamore N."/>
            <person name="Tracey A."/>
            <person name="Tromans A."/>
            <person name="Van Helmond Z."/>
            <person name="Wall M."/>
            <person name="Wallis J.M."/>
            <person name="White S."/>
            <person name="Whitehead S.L."/>
            <person name="Wilkinson J.E."/>
            <person name="Willey D.L."/>
            <person name="Williams H."/>
            <person name="Wilming L."/>
            <person name="Wray P.W."/>
            <person name="Wu Z."/>
            <person name="Coulson A."/>
            <person name="Vaudin M."/>
            <person name="Sulston J.E."/>
            <person name="Durbin R.M."/>
            <person name="Hubbard T."/>
            <person name="Wooster R."/>
            <person name="Dunham I."/>
            <person name="Carter N.P."/>
            <person name="McVean G."/>
            <person name="Ross M.T."/>
            <person name="Harrow J."/>
            <person name="Olson M.V."/>
            <person name="Beck S."/>
            <person name="Rogers J."/>
            <person name="Bentley D.R."/>
        </authorList>
    </citation>
    <scope>NUCLEOTIDE SEQUENCE [LARGE SCALE GENOMIC DNA]</scope>
</reference>
<reference key="6">
    <citation type="journal article" date="2004" name="Genome Res.">
        <title>The status, quality, and expansion of the NIH full-length cDNA project: the Mammalian Gene Collection (MGC).</title>
        <authorList>
            <consortium name="The MGC Project Team"/>
        </authorList>
    </citation>
    <scope>NUCLEOTIDE SEQUENCE [LARGE SCALE MRNA] (ISOFORM 1)</scope>
    <source>
        <tissue>Placenta</tissue>
        <tissue>Uterus</tissue>
    </source>
</reference>
<reference key="7">
    <citation type="journal article" date="2006" name="Cell">
        <title>Global, in vivo, and site-specific phosphorylation dynamics in signaling networks.</title>
        <authorList>
            <person name="Olsen J.V."/>
            <person name="Blagoev B."/>
            <person name="Gnad F."/>
            <person name="Macek B."/>
            <person name="Kumar C."/>
            <person name="Mortensen P."/>
            <person name="Mann M."/>
        </authorList>
    </citation>
    <scope>PHOSPHORYLATION [LARGE SCALE ANALYSIS] AT SER-335</scope>
    <scope>IDENTIFICATION BY MASS SPECTROMETRY [LARGE SCALE ANALYSIS]</scope>
    <source>
        <tissue>Cervix carcinoma</tissue>
    </source>
</reference>
<reference key="8">
    <citation type="journal article" date="2008" name="J. Proteome Res.">
        <title>Phosphorylation analysis of primary human T lymphocytes using sequential IMAC and titanium oxide enrichment.</title>
        <authorList>
            <person name="Carrascal M."/>
            <person name="Ovelleiro D."/>
            <person name="Casas V."/>
            <person name="Gay M."/>
            <person name="Abian J."/>
        </authorList>
    </citation>
    <scope>PHOSPHORYLATION [LARGE SCALE ANALYSIS] AT SER-335</scope>
    <scope>IDENTIFICATION BY MASS SPECTROMETRY [LARGE SCALE ANALYSIS]</scope>
    <source>
        <tissue>T-cell</tissue>
    </source>
</reference>
<reference key="9">
    <citation type="journal article" date="2008" name="Mol. Cell">
        <title>Kinase-selective enrichment enables quantitative phosphoproteomics of the kinome across the cell cycle.</title>
        <authorList>
            <person name="Daub H."/>
            <person name="Olsen J.V."/>
            <person name="Bairlein M."/>
            <person name="Gnad F."/>
            <person name="Oppermann F.S."/>
            <person name="Korner R."/>
            <person name="Greff Z."/>
            <person name="Keri G."/>
            <person name="Stemmann O."/>
            <person name="Mann M."/>
        </authorList>
    </citation>
    <scope>PHOSPHORYLATION [LARGE SCALE ANALYSIS] AT SER-335</scope>
    <scope>IDENTIFICATION BY MASS SPECTROMETRY [LARGE SCALE ANALYSIS]</scope>
    <source>
        <tissue>Cervix carcinoma</tissue>
    </source>
</reference>
<reference key="10">
    <citation type="journal article" date="2008" name="Proc. Natl. Acad. Sci. U.S.A.">
        <title>A quantitative atlas of mitotic phosphorylation.</title>
        <authorList>
            <person name="Dephoure N."/>
            <person name="Zhou C."/>
            <person name="Villen J."/>
            <person name="Beausoleil S.A."/>
            <person name="Bakalarski C.E."/>
            <person name="Elledge S.J."/>
            <person name="Gygi S.P."/>
        </authorList>
    </citation>
    <scope>PHOSPHORYLATION [LARGE SCALE ANALYSIS] AT SER-335</scope>
    <scope>IDENTIFICATION BY MASS SPECTROMETRY [LARGE SCALE ANALYSIS]</scope>
    <source>
        <tissue>Cervix carcinoma</tissue>
    </source>
</reference>
<reference key="11">
    <citation type="journal article" date="2009" name="Anal. Chem.">
        <title>Lys-N and trypsin cover complementary parts of the phosphoproteome in a refined SCX-based approach.</title>
        <authorList>
            <person name="Gauci S."/>
            <person name="Helbig A.O."/>
            <person name="Slijper M."/>
            <person name="Krijgsveld J."/>
            <person name="Heck A.J."/>
            <person name="Mohammed S."/>
        </authorList>
    </citation>
    <scope>ACETYLATION [LARGE SCALE ANALYSIS] AT MET-1</scope>
    <scope>IDENTIFICATION BY MASS SPECTROMETRY [LARGE SCALE ANALYSIS]</scope>
</reference>
<reference key="12">
    <citation type="journal article" date="2009" name="Mol. Cell. Proteomics">
        <title>A PP2A phosphatase high density interaction network identifies a novel striatin-interacting phosphatase and kinase complex linked to the cerebral cavernous malformation 3 (CCM3) protein.</title>
        <authorList>
            <person name="Goudreault M."/>
            <person name="D'Ambrosio L.M."/>
            <person name="Kean M.J."/>
            <person name="Mullin M.J."/>
            <person name="Larsen B.G."/>
            <person name="Sanchez A."/>
            <person name="Chaudhry S."/>
            <person name="Chen G.I."/>
            <person name="Sicheri F."/>
            <person name="Nesvizhskii A.I."/>
            <person name="Aebersold R."/>
            <person name="Raught B."/>
            <person name="Gingras A.C."/>
        </authorList>
    </citation>
    <scope>INTERACTION WITH CTTNBP2NL</scope>
    <scope>IDENTIFICATION IN STRIPAK COMPLEX</scope>
    <scope>FUNCTION</scope>
</reference>
<reference key="13">
    <citation type="journal article" date="2009" name="Mol. Cell. Proteomics">
        <title>Large-scale proteomics analysis of the human kinome.</title>
        <authorList>
            <person name="Oppermann F.S."/>
            <person name="Gnad F."/>
            <person name="Olsen J.V."/>
            <person name="Hornberger R."/>
            <person name="Greff Z."/>
            <person name="Keri G."/>
            <person name="Mann M."/>
            <person name="Daub H."/>
        </authorList>
    </citation>
    <scope>PHOSPHORYLATION [LARGE SCALE ANALYSIS] AT SER-335</scope>
    <scope>IDENTIFICATION BY MASS SPECTROMETRY [LARGE SCALE ANALYSIS]</scope>
</reference>
<reference key="14">
    <citation type="journal article" date="2009" name="Sci. Signal.">
        <title>Quantitative phosphoproteomic analysis of T cell receptor signaling reveals system-wide modulation of protein-protein interactions.</title>
        <authorList>
            <person name="Mayya V."/>
            <person name="Lundgren D.H."/>
            <person name="Hwang S.-I."/>
            <person name="Rezaul K."/>
            <person name="Wu L."/>
            <person name="Eng J.K."/>
            <person name="Rodionov V."/>
            <person name="Han D.K."/>
        </authorList>
    </citation>
    <scope>PHOSPHORYLATION [LARGE SCALE ANALYSIS] AT SER-335</scope>
    <scope>IDENTIFICATION BY MASS SPECTROMETRY [LARGE SCALE ANALYSIS]</scope>
    <source>
        <tissue>Leukemic T-cell</tissue>
    </source>
</reference>
<reference key="15">
    <citation type="journal article" date="2010" name="Sci. Signal.">
        <title>Quantitative phosphoproteomics reveals widespread full phosphorylation site occupancy during mitosis.</title>
        <authorList>
            <person name="Olsen J.V."/>
            <person name="Vermeulen M."/>
            <person name="Santamaria A."/>
            <person name="Kumar C."/>
            <person name="Miller M.L."/>
            <person name="Jensen L.J."/>
            <person name="Gnad F."/>
            <person name="Cox J."/>
            <person name="Jensen T.S."/>
            <person name="Nigg E.A."/>
            <person name="Brunak S."/>
            <person name="Mann M."/>
        </authorList>
    </citation>
    <scope>PHOSPHORYLATION [LARGE SCALE ANALYSIS] AT SER-335</scope>
    <scope>IDENTIFICATION BY MASS SPECTROMETRY [LARGE SCALE ANALYSIS]</scope>
    <source>
        <tissue>Cervix carcinoma</tissue>
    </source>
</reference>
<reference key="16">
    <citation type="journal article" date="2011" name="BMC Biol.">
        <title>Identification and characterization of a set of conserved and new regulators of cytoskeletal organisation, cell morphology and migration.</title>
        <authorList>
            <person name="Bai S.W."/>
            <person name="Herrera-Abreu M.T."/>
            <person name="Rohn J.L."/>
            <person name="Racine V."/>
            <person name="Tajadura V."/>
            <person name="Suryavanshi N."/>
            <person name="Bechtel S."/>
            <person name="Wiemann S."/>
            <person name="Baum B."/>
            <person name="Ridley A.J."/>
        </authorList>
    </citation>
    <scope>FUNCTION</scope>
    <scope>SUBCELLULAR LOCATION</scope>
</reference>
<reference key="17">
    <citation type="journal article" date="2011" name="BMC Syst. Biol.">
        <title>Initial characterization of the human central proteome.</title>
        <authorList>
            <person name="Burkard T.R."/>
            <person name="Planyavsky M."/>
            <person name="Kaupe I."/>
            <person name="Breitwieser F.P."/>
            <person name="Buerckstuemmer T."/>
            <person name="Bennett K.L."/>
            <person name="Superti-Furga G."/>
            <person name="Colinge J."/>
        </authorList>
    </citation>
    <scope>IDENTIFICATION BY MASS SPECTROMETRY [LARGE SCALE ANALYSIS]</scope>
</reference>
<reference key="18">
    <citation type="journal article" date="2011" name="Sci. Signal.">
        <title>System-wide temporal characterization of the proteome and phosphoproteome of human embryonic stem cell differentiation.</title>
        <authorList>
            <person name="Rigbolt K.T."/>
            <person name="Prokhorova T.A."/>
            <person name="Akimov V."/>
            <person name="Henningsen J."/>
            <person name="Johansen P.T."/>
            <person name="Kratchmarova I."/>
            <person name="Kassem M."/>
            <person name="Mann M."/>
            <person name="Olsen J.V."/>
            <person name="Blagoev B."/>
        </authorList>
    </citation>
    <scope>PHOSPHORYLATION [LARGE SCALE ANALYSIS] AT SER-335</scope>
    <scope>IDENTIFICATION BY MASS SPECTROMETRY [LARGE SCALE ANALYSIS]</scope>
</reference>
<reference key="19">
    <citation type="journal article" date="2012" name="Mol. Cell. Proteomics">
        <title>Comparative large-scale characterisation of plant vs. mammal proteins reveals similar and idiosyncratic N-alpha acetylation features.</title>
        <authorList>
            <person name="Bienvenut W.V."/>
            <person name="Sumpton D."/>
            <person name="Martinez A."/>
            <person name="Lilla S."/>
            <person name="Espagne C."/>
            <person name="Meinnel T."/>
            <person name="Giglione C."/>
        </authorList>
    </citation>
    <scope>ACETYLATION [LARGE SCALE ANALYSIS] AT MET-1</scope>
    <scope>IDENTIFICATION BY MASS SPECTROMETRY [LARGE SCALE ANALYSIS]</scope>
</reference>
<reference key="20">
    <citation type="journal article" date="2013" name="J. Proteome Res.">
        <title>Toward a comprehensive characterization of a human cancer cell phosphoproteome.</title>
        <authorList>
            <person name="Zhou H."/>
            <person name="Di Palma S."/>
            <person name="Preisinger C."/>
            <person name="Peng M."/>
            <person name="Polat A.N."/>
            <person name="Heck A.J."/>
            <person name="Mohammed S."/>
        </authorList>
    </citation>
    <scope>PHOSPHORYLATION [LARGE SCALE ANALYSIS] AT SER-59 AND SER-335</scope>
    <scope>IDENTIFICATION BY MASS SPECTROMETRY [LARGE SCALE ANALYSIS]</scope>
    <source>
        <tissue>Cervix carcinoma</tissue>
        <tissue>Erythroleukemia</tissue>
    </source>
</reference>
<reference key="21">
    <citation type="journal article" date="2014" name="J. Proteomics">
        <title>An enzyme assisted RP-RPLC approach for in-depth analysis of human liver phosphoproteome.</title>
        <authorList>
            <person name="Bian Y."/>
            <person name="Song C."/>
            <person name="Cheng K."/>
            <person name="Dong M."/>
            <person name="Wang F."/>
            <person name="Huang J."/>
            <person name="Sun D."/>
            <person name="Wang L."/>
            <person name="Ye M."/>
            <person name="Zou H."/>
        </authorList>
    </citation>
    <scope>PHOSPHORYLATION [LARGE SCALE ANALYSIS] AT SER-59; SER-335 AND SER-788</scope>
    <scope>IDENTIFICATION BY MASS SPECTROMETRY [LARGE SCALE ANALYSIS]</scope>
    <source>
        <tissue>Liver</tissue>
    </source>
</reference>
<reference key="22">
    <citation type="journal article" date="2015" name="Nat. Commun.">
        <title>CCM-3/STRIPAK promotes seamless tube extension through endocytic recycling.</title>
        <authorList>
            <person name="Lant B."/>
            <person name="Yu B."/>
            <person name="Goudreault M."/>
            <person name="Holmyard D."/>
            <person name="Knight J.D."/>
            <person name="Xu P."/>
            <person name="Zhao L."/>
            <person name="Chin K."/>
            <person name="Wallace E."/>
            <person name="Zhen M."/>
            <person name="Gingras A.C."/>
            <person name="Derry W.B."/>
        </authorList>
    </citation>
    <scope>INTERACTION WITH CDC42BPB; STRN3 AND SIKE1</scope>
</reference>
<reference key="23">
    <citation type="journal article" date="2019" name="Cell Discov.">
        <title>Architecture, substructures, and dynamic assembly of STRIPAK complexes in Hippo signaling.</title>
        <authorList>
            <person name="Tang Y."/>
            <person name="Chen M."/>
            <person name="Zhou L."/>
            <person name="Ma J."/>
            <person name="Li Y."/>
            <person name="Zhang H."/>
            <person name="Shi Z."/>
            <person name="Xu Q."/>
            <person name="Zhang X."/>
            <person name="Gao Z."/>
            <person name="Zhao Y."/>
            <person name="Cheng Y."/>
            <person name="Jiao S."/>
            <person name="Zhou Z."/>
        </authorList>
    </citation>
    <scope>IDENTIFICATION IN THE STRIPAK COMPLEX</scope>
    <scope>FUNCTION</scope>
</reference>
<reference evidence="13" key="24">
    <citation type="journal article" date="2021" name="Nat. Struct. Mol. Biol.">
        <title>Cryo-EM structure of the Hippo signaling integrator human STRIPAK.</title>
        <authorList>
            <person name="Jeong B.C."/>
            <person name="Bae S.J."/>
            <person name="Ni L."/>
            <person name="Zhang X."/>
            <person name="Bai X.C."/>
            <person name="Luo X."/>
        </authorList>
    </citation>
    <scope>STRUCTURE BY ELECTRON MICROSCOPY (3.30 ANGSTROMS) IN THE STRIPAK COMPLEX</scope>
    <scope>SUBUNIT</scope>
    <scope>FUNCTION</scope>
    <scope>MUTAGENESIS OF 131-ASP--GLU-134; LYS-427 AND ARG-744</scope>
</reference>
<reference key="25">
    <citation type="journal article" date="2016" name="J. Med. Genet.">
        <title>Homozygous missense mutation in the LMAN2L gene segregates with intellectual disability in a large consanguineous Pakistani family.</title>
        <authorList>
            <person name="Rafiullah R."/>
            <person name="Aslamkhan M."/>
            <person name="Paramasivam N."/>
            <person name="Thiel C."/>
            <person name="Mustafa G."/>
            <person name="Wiemann S."/>
            <person name="Schlesner M."/>
            <person name="Wade R.C."/>
            <person name="Rappold G.A."/>
            <person name="Berkel S."/>
        </authorList>
    </citation>
    <scope>VARIANT ASN-628</scope>
</reference>